<dbReference type="SMR" id="P84971"/>
<dbReference type="GO" id="GO:0050832">
    <property type="term" value="P:defense response to fungus"/>
    <property type="evidence" value="ECO:0007669"/>
    <property type="project" value="UniProtKB-KW"/>
</dbReference>
<dbReference type="GO" id="GO:0031640">
    <property type="term" value="P:killing of cells of another organism"/>
    <property type="evidence" value="ECO:0007669"/>
    <property type="project" value="UniProtKB-KW"/>
</dbReference>
<dbReference type="Gene3D" id="3.30.30.10">
    <property type="entry name" value="Knottin, scorpion toxin-like"/>
    <property type="match status" value="1"/>
</dbReference>
<dbReference type="InterPro" id="IPR008176">
    <property type="entry name" value="Defensin_plant"/>
</dbReference>
<dbReference type="InterPro" id="IPR003614">
    <property type="entry name" value="Scorpion_toxin-like"/>
</dbReference>
<dbReference type="InterPro" id="IPR036574">
    <property type="entry name" value="Scorpion_toxin-like_sf"/>
</dbReference>
<dbReference type="Pfam" id="PF00304">
    <property type="entry name" value="Gamma-thionin"/>
    <property type="match status" value="1"/>
</dbReference>
<dbReference type="PRINTS" id="PR00288">
    <property type="entry name" value="PUROTHIONIN"/>
</dbReference>
<dbReference type="SMART" id="SM00505">
    <property type="entry name" value="Knot1"/>
    <property type="match status" value="1"/>
</dbReference>
<dbReference type="SUPFAM" id="SSF57095">
    <property type="entry name" value="Scorpion toxin-like"/>
    <property type="match status" value="1"/>
</dbReference>
<dbReference type="PROSITE" id="PS00940">
    <property type="entry name" value="GAMMA_THIONIN"/>
    <property type="match status" value="1"/>
</dbReference>
<protein>
    <recommendedName>
        <fullName>Defensin Tk-AMP-D4</fullName>
    </recommendedName>
</protein>
<accession>P84971</accession>
<feature type="chain" id="PRO_0000287892" description="Defensin Tk-AMP-D4">
    <location>
        <begin position="1"/>
        <end position="45"/>
    </location>
</feature>
<feature type="disulfide bond" evidence="1">
    <location>
        <begin position="3"/>
        <end position="45"/>
    </location>
</feature>
<feature type="disulfide bond" evidence="1">
    <location>
        <begin position="14"/>
        <end position="34"/>
    </location>
</feature>
<feature type="disulfide bond" evidence="1">
    <location>
        <begin position="20"/>
        <end position="39"/>
    </location>
</feature>
<feature type="disulfide bond" evidence="1">
    <location>
        <begin position="24"/>
        <end position="41"/>
    </location>
</feature>
<proteinExistence type="evidence at protein level"/>
<sequence length="45" mass="4990">RDCTSQSHKFVGLCLSDRNCASVCLTEYFTGGKCDHRRCVCTKGC</sequence>
<evidence type="ECO:0000250" key="1">
    <source>
        <dbReference type="UniProtKB" id="Q8GTM0"/>
    </source>
</evidence>
<evidence type="ECO:0000269" key="2">
    <source>
    </source>
</evidence>
<evidence type="ECO:0000305" key="3"/>
<keyword id="KW-0929">Antimicrobial</keyword>
<keyword id="KW-0903">Direct protein sequencing</keyword>
<keyword id="KW-1015">Disulfide bond</keyword>
<keyword id="KW-0295">Fungicide</keyword>
<keyword id="KW-0611">Plant defense</keyword>
<comment type="function">
    <text evidence="1">Plant defense peptide.</text>
</comment>
<comment type="mass spectrometry" mass="4980.0" method="MALDI" evidence="2"/>
<comment type="similarity">
    <text evidence="3">Belongs to the DEFL family.</text>
</comment>
<reference evidence="3" key="1">
    <citation type="journal article" date="2007" name="Biochimie">
        <title>Seed defensins from T. kiharae and related species: Genome localization of defensin-encoding genes.</title>
        <authorList>
            <person name="Odintsova T.I."/>
            <person name="Egorov T.A."/>
            <person name="Musolyamov A.K."/>
            <person name="Odintsova M.S."/>
            <person name="Pukhalsky V.A."/>
            <person name="Grishin E.V."/>
        </authorList>
    </citation>
    <scope>PROTEIN SEQUENCE</scope>
    <scope>MASS SPECTROMETRY</scope>
    <source>
        <tissue evidence="2">Seed</tissue>
    </source>
</reference>
<name>DEF4_TRIKH</name>
<organism>
    <name type="scientific">Triticum kiharae</name>
    <name type="common">Wheat</name>
    <dbReference type="NCBI Taxonomy" id="376535"/>
    <lineage>
        <taxon>Eukaryota</taxon>
        <taxon>Viridiplantae</taxon>
        <taxon>Streptophyta</taxon>
        <taxon>Embryophyta</taxon>
        <taxon>Tracheophyta</taxon>
        <taxon>Spermatophyta</taxon>
        <taxon>Magnoliopsida</taxon>
        <taxon>Liliopsida</taxon>
        <taxon>Poales</taxon>
        <taxon>Poaceae</taxon>
        <taxon>BOP clade</taxon>
        <taxon>Pooideae</taxon>
        <taxon>Triticodae</taxon>
        <taxon>Triticeae</taxon>
        <taxon>Triticinae</taxon>
        <taxon>Triticum</taxon>
    </lineage>
</organism>